<protein>
    <recommendedName>
        <fullName evidence="1">Aspartate--tRNA(Asp/Asn) ligase</fullName>
        <ecNumber evidence="1">6.1.1.23</ecNumber>
    </recommendedName>
    <alternativeName>
        <fullName evidence="1">Aspartyl-tRNA synthetase</fullName>
        <shortName evidence="1">AspRS</shortName>
    </alternativeName>
    <alternativeName>
        <fullName evidence="1">Non-discriminating aspartyl-tRNA synthetase</fullName>
        <shortName evidence="1">ND-AspRS</shortName>
    </alternativeName>
</protein>
<feature type="chain" id="PRO_1000006742" description="Aspartate--tRNA(Asp/Asn) ligase">
    <location>
        <begin position="1"/>
        <end position="591"/>
    </location>
</feature>
<feature type="region of interest" description="Aspartate" evidence="1">
    <location>
        <begin position="199"/>
        <end position="202"/>
    </location>
</feature>
<feature type="binding site" evidence="1">
    <location>
        <position position="175"/>
    </location>
    <ligand>
        <name>L-aspartate</name>
        <dbReference type="ChEBI" id="CHEBI:29991"/>
    </ligand>
</feature>
<feature type="binding site" evidence="1">
    <location>
        <begin position="221"/>
        <end position="223"/>
    </location>
    <ligand>
        <name>ATP</name>
        <dbReference type="ChEBI" id="CHEBI:30616"/>
    </ligand>
</feature>
<feature type="binding site" evidence="1">
    <location>
        <position position="221"/>
    </location>
    <ligand>
        <name>L-aspartate</name>
        <dbReference type="ChEBI" id="CHEBI:29991"/>
    </ligand>
</feature>
<feature type="binding site" evidence="1">
    <location>
        <position position="453"/>
    </location>
    <ligand>
        <name>L-aspartate</name>
        <dbReference type="ChEBI" id="CHEBI:29991"/>
    </ligand>
</feature>
<feature type="binding site" evidence="1">
    <location>
        <position position="486"/>
    </location>
    <ligand>
        <name>ATP</name>
        <dbReference type="ChEBI" id="CHEBI:30616"/>
    </ligand>
</feature>
<feature type="binding site" evidence="1">
    <location>
        <position position="493"/>
    </location>
    <ligand>
        <name>L-aspartate</name>
        <dbReference type="ChEBI" id="CHEBI:29991"/>
    </ligand>
</feature>
<feature type="binding site" evidence="1">
    <location>
        <begin position="538"/>
        <end position="541"/>
    </location>
    <ligand>
        <name>ATP</name>
        <dbReference type="ChEBI" id="CHEBI:30616"/>
    </ligand>
</feature>
<feature type="site" description="Important for tRNA non-discrimination" evidence="1">
    <location>
        <position position="33"/>
    </location>
</feature>
<name>SYDND_CERS1</name>
<reference key="1">
    <citation type="submission" date="2007-02" db="EMBL/GenBank/DDBJ databases">
        <title>Complete sequence of chromosome 1 of Rhodobacter sphaeroides ATCC 17029.</title>
        <authorList>
            <person name="Copeland A."/>
            <person name="Lucas S."/>
            <person name="Lapidus A."/>
            <person name="Barry K."/>
            <person name="Detter J.C."/>
            <person name="Glavina del Rio T."/>
            <person name="Hammon N."/>
            <person name="Israni S."/>
            <person name="Dalin E."/>
            <person name="Tice H."/>
            <person name="Pitluck S."/>
            <person name="Kiss H."/>
            <person name="Brettin T."/>
            <person name="Bruce D."/>
            <person name="Han C."/>
            <person name="Tapia R."/>
            <person name="Gilna P."/>
            <person name="Schmutz J."/>
            <person name="Larimer F."/>
            <person name="Land M."/>
            <person name="Hauser L."/>
            <person name="Kyrpides N."/>
            <person name="Mikhailova N."/>
            <person name="Richardson P."/>
            <person name="Mackenzie C."/>
            <person name="Choudhary M."/>
            <person name="Donohue T.J."/>
            <person name="Kaplan S."/>
        </authorList>
    </citation>
    <scope>NUCLEOTIDE SEQUENCE [LARGE SCALE GENOMIC DNA]</scope>
    <source>
        <strain>ATCC 17029 / ATH 2.4.9</strain>
    </source>
</reference>
<keyword id="KW-0030">Aminoacyl-tRNA synthetase</keyword>
<keyword id="KW-0067">ATP-binding</keyword>
<keyword id="KW-0963">Cytoplasm</keyword>
<keyword id="KW-0436">Ligase</keyword>
<keyword id="KW-0547">Nucleotide-binding</keyword>
<keyword id="KW-0648">Protein biosynthesis</keyword>
<accession>A3PMK8</accession>
<dbReference type="EC" id="6.1.1.23" evidence="1"/>
<dbReference type="EMBL" id="CP000577">
    <property type="protein sequence ID" value="ABN77574.1"/>
    <property type="molecule type" value="Genomic_DNA"/>
</dbReference>
<dbReference type="RefSeq" id="WP_011338512.1">
    <property type="nucleotide sequence ID" value="NC_009049.1"/>
</dbReference>
<dbReference type="SMR" id="A3PMK8"/>
<dbReference type="GeneID" id="3718393"/>
<dbReference type="KEGG" id="rsh:Rsph17029_2472"/>
<dbReference type="HOGENOM" id="CLU_014330_3_2_5"/>
<dbReference type="GO" id="GO:0005737">
    <property type="term" value="C:cytoplasm"/>
    <property type="evidence" value="ECO:0007669"/>
    <property type="project" value="UniProtKB-SubCell"/>
</dbReference>
<dbReference type="GO" id="GO:0004815">
    <property type="term" value="F:aspartate-tRNA ligase activity"/>
    <property type="evidence" value="ECO:0007669"/>
    <property type="project" value="UniProtKB-UniRule"/>
</dbReference>
<dbReference type="GO" id="GO:0050560">
    <property type="term" value="F:aspartate-tRNA(Asn) ligase activity"/>
    <property type="evidence" value="ECO:0007669"/>
    <property type="project" value="UniProtKB-EC"/>
</dbReference>
<dbReference type="GO" id="GO:0005524">
    <property type="term" value="F:ATP binding"/>
    <property type="evidence" value="ECO:0007669"/>
    <property type="project" value="UniProtKB-UniRule"/>
</dbReference>
<dbReference type="GO" id="GO:0003676">
    <property type="term" value="F:nucleic acid binding"/>
    <property type="evidence" value="ECO:0007669"/>
    <property type="project" value="InterPro"/>
</dbReference>
<dbReference type="GO" id="GO:0006422">
    <property type="term" value="P:aspartyl-tRNA aminoacylation"/>
    <property type="evidence" value="ECO:0007669"/>
    <property type="project" value="UniProtKB-UniRule"/>
</dbReference>
<dbReference type="CDD" id="cd04317">
    <property type="entry name" value="EcAspRS_like_N"/>
    <property type="match status" value="1"/>
</dbReference>
<dbReference type="Gene3D" id="3.30.930.10">
    <property type="entry name" value="Bira Bifunctional Protein, Domain 2"/>
    <property type="match status" value="1"/>
</dbReference>
<dbReference type="Gene3D" id="3.30.1360.30">
    <property type="entry name" value="GAD-like domain"/>
    <property type="match status" value="1"/>
</dbReference>
<dbReference type="Gene3D" id="2.40.50.140">
    <property type="entry name" value="Nucleic acid-binding proteins"/>
    <property type="match status" value="1"/>
</dbReference>
<dbReference type="HAMAP" id="MF_00044">
    <property type="entry name" value="Asp_tRNA_synth_type1"/>
    <property type="match status" value="1"/>
</dbReference>
<dbReference type="InterPro" id="IPR004364">
    <property type="entry name" value="Aa-tRNA-synt_II"/>
</dbReference>
<dbReference type="InterPro" id="IPR006195">
    <property type="entry name" value="aa-tRNA-synth_II"/>
</dbReference>
<dbReference type="InterPro" id="IPR045864">
    <property type="entry name" value="aa-tRNA-synth_II/BPL/LPL"/>
</dbReference>
<dbReference type="InterPro" id="IPR004524">
    <property type="entry name" value="Asp-tRNA-ligase_1"/>
</dbReference>
<dbReference type="InterPro" id="IPR047089">
    <property type="entry name" value="Asp-tRNA-ligase_1_N"/>
</dbReference>
<dbReference type="InterPro" id="IPR002312">
    <property type="entry name" value="Asp/Asn-tRNA-synth_IIb"/>
</dbReference>
<dbReference type="InterPro" id="IPR004115">
    <property type="entry name" value="GAD-like_sf"/>
</dbReference>
<dbReference type="InterPro" id="IPR029351">
    <property type="entry name" value="GAD_dom"/>
</dbReference>
<dbReference type="InterPro" id="IPR012340">
    <property type="entry name" value="NA-bd_OB-fold"/>
</dbReference>
<dbReference type="InterPro" id="IPR004365">
    <property type="entry name" value="NA-bd_OB_tRNA"/>
</dbReference>
<dbReference type="NCBIfam" id="TIGR00459">
    <property type="entry name" value="aspS_bact"/>
    <property type="match status" value="1"/>
</dbReference>
<dbReference type="NCBIfam" id="NF001750">
    <property type="entry name" value="PRK00476.1"/>
    <property type="match status" value="1"/>
</dbReference>
<dbReference type="PANTHER" id="PTHR22594:SF5">
    <property type="entry name" value="ASPARTATE--TRNA LIGASE, MITOCHONDRIAL"/>
    <property type="match status" value="1"/>
</dbReference>
<dbReference type="PANTHER" id="PTHR22594">
    <property type="entry name" value="ASPARTYL/LYSYL-TRNA SYNTHETASE"/>
    <property type="match status" value="1"/>
</dbReference>
<dbReference type="Pfam" id="PF02938">
    <property type="entry name" value="GAD"/>
    <property type="match status" value="1"/>
</dbReference>
<dbReference type="Pfam" id="PF00152">
    <property type="entry name" value="tRNA-synt_2"/>
    <property type="match status" value="1"/>
</dbReference>
<dbReference type="Pfam" id="PF01336">
    <property type="entry name" value="tRNA_anti-codon"/>
    <property type="match status" value="1"/>
</dbReference>
<dbReference type="PRINTS" id="PR01042">
    <property type="entry name" value="TRNASYNTHASP"/>
</dbReference>
<dbReference type="SUPFAM" id="SSF55681">
    <property type="entry name" value="Class II aaRS and biotin synthetases"/>
    <property type="match status" value="1"/>
</dbReference>
<dbReference type="SUPFAM" id="SSF55261">
    <property type="entry name" value="GAD domain-like"/>
    <property type="match status" value="1"/>
</dbReference>
<dbReference type="SUPFAM" id="SSF50249">
    <property type="entry name" value="Nucleic acid-binding proteins"/>
    <property type="match status" value="1"/>
</dbReference>
<dbReference type="PROSITE" id="PS50862">
    <property type="entry name" value="AA_TRNA_LIGASE_II"/>
    <property type="match status" value="1"/>
</dbReference>
<organism>
    <name type="scientific">Cereibacter sphaeroides (strain ATCC 17029 / ATH 2.4.9)</name>
    <name type="common">Rhodobacter sphaeroides</name>
    <dbReference type="NCBI Taxonomy" id="349101"/>
    <lineage>
        <taxon>Bacteria</taxon>
        <taxon>Pseudomonadati</taxon>
        <taxon>Pseudomonadota</taxon>
        <taxon>Alphaproteobacteria</taxon>
        <taxon>Rhodobacterales</taxon>
        <taxon>Paracoccaceae</taxon>
        <taxon>Cereibacter</taxon>
    </lineage>
</organism>
<comment type="function">
    <text evidence="1">Aspartyl-tRNA synthetase with relaxed tRNA specificity since it is able to aspartylate not only its cognate tRNA(Asp) but also tRNA(Asn). Reaction proceeds in two steps: L-aspartate is first activated by ATP to form Asp-AMP and then transferred to the acceptor end of tRNA(Asp/Asn).</text>
</comment>
<comment type="catalytic activity">
    <reaction evidence="1">
        <text>tRNA(Asx) + L-aspartate + ATP = L-aspartyl-tRNA(Asx) + AMP + diphosphate</text>
        <dbReference type="Rhea" id="RHEA:18349"/>
        <dbReference type="Rhea" id="RHEA-COMP:9710"/>
        <dbReference type="Rhea" id="RHEA-COMP:9711"/>
        <dbReference type="ChEBI" id="CHEBI:29991"/>
        <dbReference type="ChEBI" id="CHEBI:30616"/>
        <dbReference type="ChEBI" id="CHEBI:33019"/>
        <dbReference type="ChEBI" id="CHEBI:78442"/>
        <dbReference type="ChEBI" id="CHEBI:78516"/>
        <dbReference type="ChEBI" id="CHEBI:456215"/>
        <dbReference type="EC" id="6.1.1.23"/>
    </reaction>
</comment>
<comment type="subunit">
    <text evidence="1">Homodimer.</text>
</comment>
<comment type="subcellular location">
    <subcellularLocation>
        <location evidence="1">Cytoplasm</location>
    </subcellularLocation>
</comment>
<comment type="similarity">
    <text evidence="1">Belongs to the class-II aminoacyl-tRNA synthetase family. Type 1 subfamily.</text>
</comment>
<gene>
    <name evidence="1" type="primary">aspS</name>
    <name type="ordered locus">Rsph17029_2472</name>
</gene>
<proteinExistence type="inferred from homology"/>
<evidence type="ECO:0000255" key="1">
    <source>
        <dbReference type="HAMAP-Rule" id="MF_00044"/>
    </source>
</evidence>
<sequence>MHAYRSHTCTELNAAHVGQEVRLSGWVHRVRDHGGVLFLDLRDHYGITQVIADADSPAFAELETVRAEWVIRIEGRVKARDASLVNPKLATGEIEVYATGMSVLGAADELPLPVFGETDYPEETRLTYRFLDLRREKLHQNMMLRSNVVRSLRNRMWGAGFNEFQTPIITASSPEGARDFLVPSRLHPGKFYALPQAPQQFKQLIMVAGFDRYFQIAPCFRDEDPRADRSPTDFYQLDIEMSFVEQEDVFAAVQPVIQGLFEEFGHGKRVDADWPRIAYRDAMLWYGSDKPDLRNPIKMQVVSEHFAGSGFAIFAKLLENEGTEIRAIPAPTGGSRKFCDRMNAFAQSQGLPGMGYIFWRKGDDGAMEAAGPLAKNIGPERTEAIRQQLGLGEGDAAFFLGGKPETFEAVAGRARTEIGRELGLTEENCFKFAWIVDFPMYEKDDEGKIDFSHNPFSMPQGGMEALEGDPLKVHAYQYDLACNGYELISGGIRNHKPEIMFKAFELAGYPKEEVEKRFGGMVKAFRYGAPPHGGCAAGIDRIVMLLADEANIREVIMFPMNQRAEDLLMGAPSEPTNEQLRELRLRVVPKD</sequence>